<gene>
    <name evidence="1" type="primary">hemA</name>
    <name type="ordered locus">M164_1963</name>
</gene>
<accession>C4KJ02</accession>
<feature type="chain" id="PRO_1000202643" description="Glutamyl-tRNA reductase">
    <location>
        <begin position="1"/>
        <end position="426"/>
    </location>
</feature>
<feature type="active site" description="Nucleophile" evidence="1">
    <location>
        <position position="53"/>
    </location>
</feature>
<feature type="binding site" evidence="1">
    <location>
        <begin position="52"/>
        <end position="55"/>
    </location>
    <ligand>
        <name>substrate</name>
    </ligand>
</feature>
<feature type="binding site" evidence="1">
    <location>
        <position position="110"/>
    </location>
    <ligand>
        <name>substrate</name>
    </ligand>
</feature>
<feature type="binding site" evidence="1">
    <location>
        <begin position="115"/>
        <end position="117"/>
    </location>
    <ligand>
        <name>substrate</name>
    </ligand>
</feature>
<feature type="binding site" evidence="1">
    <location>
        <position position="121"/>
    </location>
    <ligand>
        <name>substrate</name>
    </ligand>
</feature>
<feature type="binding site" evidence="1">
    <location>
        <begin position="190"/>
        <end position="195"/>
    </location>
    <ligand>
        <name>NADP(+)</name>
        <dbReference type="ChEBI" id="CHEBI:58349"/>
    </ligand>
</feature>
<feature type="site" description="Important for activity" evidence="1">
    <location>
        <position position="100"/>
    </location>
</feature>
<comment type="function">
    <text evidence="1">Catalyzes the NADPH-dependent reduction of glutamyl-tRNA(Glu) to glutamate 1-semialdehyde (GSA).</text>
</comment>
<comment type="catalytic activity">
    <reaction evidence="1">
        <text>(S)-4-amino-5-oxopentanoate + tRNA(Glu) + NADP(+) = L-glutamyl-tRNA(Glu) + NADPH + H(+)</text>
        <dbReference type="Rhea" id="RHEA:12344"/>
        <dbReference type="Rhea" id="RHEA-COMP:9663"/>
        <dbReference type="Rhea" id="RHEA-COMP:9680"/>
        <dbReference type="ChEBI" id="CHEBI:15378"/>
        <dbReference type="ChEBI" id="CHEBI:57501"/>
        <dbReference type="ChEBI" id="CHEBI:57783"/>
        <dbReference type="ChEBI" id="CHEBI:58349"/>
        <dbReference type="ChEBI" id="CHEBI:78442"/>
        <dbReference type="ChEBI" id="CHEBI:78520"/>
        <dbReference type="EC" id="1.2.1.70"/>
    </reaction>
</comment>
<comment type="pathway">
    <text evidence="1">Porphyrin-containing compound metabolism; protoporphyrin-IX biosynthesis; 5-aminolevulinate from L-glutamyl-tRNA(Glu): step 1/2.</text>
</comment>
<comment type="subunit">
    <text evidence="1">Homodimer.</text>
</comment>
<comment type="domain">
    <text evidence="1">Possesses an unusual extended V-shaped dimeric structure with each monomer consisting of three distinct domains arranged along a curved 'spinal' alpha-helix. The N-terminal catalytic domain specifically recognizes the glutamate moiety of the substrate. The second domain is the NADPH-binding domain, and the third C-terminal domain is responsible for dimerization.</text>
</comment>
<comment type="miscellaneous">
    <text evidence="1">During catalysis, the active site Cys acts as a nucleophile attacking the alpha-carbonyl group of tRNA-bound glutamate with the formation of a thioester intermediate between enzyme and glutamate, and the concomitant release of tRNA(Glu). The thioester intermediate is finally reduced by direct hydride transfer from NADPH, to form the product GSA.</text>
</comment>
<comment type="similarity">
    <text evidence="1">Belongs to the glutamyl-tRNA reductase family.</text>
</comment>
<name>HEM1_SACI6</name>
<proteinExistence type="inferred from homology"/>
<keyword id="KW-0521">NADP</keyword>
<keyword id="KW-0560">Oxidoreductase</keyword>
<keyword id="KW-0627">Porphyrin biosynthesis</keyword>
<sequence length="426" mass="49336">MTSNEELLQNYCSILFTYKTIGISNLHLYYFRETEIKSLRQLINAEFAILQTCNRVEIYLYSNTNTISEINKMIQYLNNVHNEPIGNQARVICGKDSIKHLFLVASGADSLSIGEYEILSQIRSTIDMFKKLGFSGKYLQILFERAIKVGRKVREETSISKGKVGIYSLAIDEAKRQFNNFYDRKIVIVGAGEMGQKIANMLYNEGVKNVTIMNRTVEKAKQLALKFGYNYEKLDLDKLGSFDIAFISISHENLRLENKWNTLIVDITVPPLFTGNNVITLEELEKISKLNFKAREEELVKINKLVEDGIDELIYDYKKEIYSEFMSKIMKRVETIRENEIVRAYKELEKLGINNQQVKEILDLMTRSIIKKSFQPLFDNVRSLVFDGENSINYINFLIDIFKDGNIPIFETKKIKKKQISKRSSS</sequence>
<protein>
    <recommendedName>
        <fullName evidence="1">Glutamyl-tRNA reductase</fullName>
        <shortName evidence="1">GluTR</shortName>
        <ecNumber evidence="1">1.2.1.70</ecNumber>
    </recommendedName>
</protein>
<organism>
    <name type="scientific">Saccharolobus islandicus (strain M.16.4 / Kamchatka #3)</name>
    <name type="common">Sulfolobus islandicus</name>
    <dbReference type="NCBI Taxonomy" id="426118"/>
    <lineage>
        <taxon>Archaea</taxon>
        <taxon>Thermoproteota</taxon>
        <taxon>Thermoprotei</taxon>
        <taxon>Sulfolobales</taxon>
        <taxon>Sulfolobaceae</taxon>
        <taxon>Saccharolobus</taxon>
    </lineage>
</organism>
<reference key="1">
    <citation type="journal article" date="2009" name="Proc. Natl. Acad. Sci. U.S.A.">
        <title>Biogeography of the Sulfolobus islandicus pan-genome.</title>
        <authorList>
            <person name="Reno M.L."/>
            <person name="Held N.L."/>
            <person name="Fields C.J."/>
            <person name="Burke P.V."/>
            <person name="Whitaker R.J."/>
        </authorList>
    </citation>
    <scope>NUCLEOTIDE SEQUENCE [LARGE SCALE GENOMIC DNA]</scope>
    <source>
        <strain>M.16.4 / Kamchatka #3</strain>
    </source>
</reference>
<evidence type="ECO:0000255" key="1">
    <source>
        <dbReference type="HAMAP-Rule" id="MF_00087"/>
    </source>
</evidence>
<dbReference type="EC" id="1.2.1.70" evidence="1"/>
<dbReference type="EMBL" id="CP001402">
    <property type="protein sequence ID" value="ACR42566.1"/>
    <property type="molecule type" value="Genomic_DNA"/>
</dbReference>
<dbReference type="RefSeq" id="WP_012711926.1">
    <property type="nucleotide sequence ID" value="NC_012726.1"/>
</dbReference>
<dbReference type="SMR" id="C4KJ02"/>
<dbReference type="KEGG" id="sid:M164_1963"/>
<dbReference type="HOGENOM" id="CLU_035113_0_0_2"/>
<dbReference type="UniPathway" id="UPA00251">
    <property type="reaction ID" value="UER00316"/>
</dbReference>
<dbReference type="Proteomes" id="UP000001479">
    <property type="component" value="Chromosome"/>
</dbReference>
<dbReference type="GO" id="GO:0008883">
    <property type="term" value="F:glutamyl-tRNA reductase activity"/>
    <property type="evidence" value="ECO:0007669"/>
    <property type="project" value="UniProtKB-UniRule"/>
</dbReference>
<dbReference type="GO" id="GO:0050661">
    <property type="term" value="F:NADP binding"/>
    <property type="evidence" value="ECO:0007669"/>
    <property type="project" value="InterPro"/>
</dbReference>
<dbReference type="GO" id="GO:0019353">
    <property type="term" value="P:protoporphyrinogen IX biosynthetic process from glutamate"/>
    <property type="evidence" value="ECO:0007669"/>
    <property type="project" value="TreeGrafter"/>
</dbReference>
<dbReference type="CDD" id="cd05213">
    <property type="entry name" value="NAD_bind_Glutamyl_tRNA_reduct"/>
    <property type="match status" value="1"/>
</dbReference>
<dbReference type="FunFam" id="3.30.460.30:FF:000002">
    <property type="entry name" value="Glutamyl-tRNA reductase"/>
    <property type="match status" value="1"/>
</dbReference>
<dbReference type="Gene3D" id="3.30.460.30">
    <property type="entry name" value="Glutamyl-tRNA reductase, N-terminal domain"/>
    <property type="match status" value="1"/>
</dbReference>
<dbReference type="Gene3D" id="3.40.50.720">
    <property type="entry name" value="NAD(P)-binding Rossmann-like Domain"/>
    <property type="match status" value="1"/>
</dbReference>
<dbReference type="HAMAP" id="MF_00087">
    <property type="entry name" value="Glu_tRNA_reductase"/>
    <property type="match status" value="1"/>
</dbReference>
<dbReference type="InterPro" id="IPR000343">
    <property type="entry name" value="4pyrrol_synth_GluRdtase"/>
</dbReference>
<dbReference type="InterPro" id="IPR015896">
    <property type="entry name" value="4pyrrol_synth_GluRdtase_dimer"/>
</dbReference>
<dbReference type="InterPro" id="IPR015895">
    <property type="entry name" value="4pyrrol_synth_GluRdtase_N"/>
</dbReference>
<dbReference type="InterPro" id="IPR018214">
    <property type="entry name" value="GluRdtase_CS"/>
</dbReference>
<dbReference type="InterPro" id="IPR036453">
    <property type="entry name" value="GluRdtase_dimer_dom_sf"/>
</dbReference>
<dbReference type="InterPro" id="IPR036343">
    <property type="entry name" value="GluRdtase_N_sf"/>
</dbReference>
<dbReference type="InterPro" id="IPR036291">
    <property type="entry name" value="NAD(P)-bd_dom_sf"/>
</dbReference>
<dbReference type="InterPro" id="IPR006151">
    <property type="entry name" value="Shikm_DH/Glu-tRNA_Rdtase"/>
</dbReference>
<dbReference type="NCBIfam" id="TIGR01035">
    <property type="entry name" value="hemA"/>
    <property type="match status" value="1"/>
</dbReference>
<dbReference type="NCBIfam" id="NF000751">
    <property type="entry name" value="PRK00045.4-1"/>
    <property type="match status" value="1"/>
</dbReference>
<dbReference type="NCBIfam" id="NF000752">
    <property type="entry name" value="PRK00045.4-2"/>
    <property type="match status" value="1"/>
</dbReference>
<dbReference type="PANTHER" id="PTHR43013">
    <property type="entry name" value="GLUTAMYL-TRNA REDUCTASE"/>
    <property type="match status" value="1"/>
</dbReference>
<dbReference type="PANTHER" id="PTHR43013:SF1">
    <property type="entry name" value="GLUTAMYL-TRNA REDUCTASE"/>
    <property type="match status" value="1"/>
</dbReference>
<dbReference type="Pfam" id="PF00745">
    <property type="entry name" value="GlutR_dimer"/>
    <property type="match status" value="1"/>
</dbReference>
<dbReference type="Pfam" id="PF05201">
    <property type="entry name" value="GlutR_N"/>
    <property type="match status" value="1"/>
</dbReference>
<dbReference type="Pfam" id="PF01488">
    <property type="entry name" value="Shikimate_DH"/>
    <property type="match status" value="1"/>
</dbReference>
<dbReference type="PIRSF" id="PIRSF000445">
    <property type="entry name" value="4pyrrol_synth_GluRdtase"/>
    <property type="match status" value="1"/>
</dbReference>
<dbReference type="SUPFAM" id="SSF69742">
    <property type="entry name" value="Glutamyl tRNA-reductase catalytic, N-terminal domain"/>
    <property type="match status" value="1"/>
</dbReference>
<dbReference type="SUPFAM" id="SSF69075">
    <property type="entry name" value="Glutamyl tRNA-reductase dimerization domain"/>
    <property type="match status" value="1"/>
</dbReference>
<dbReference type="SUPFAM" id="SSF51735">
    <property type="entry name" value="NAD(P)-binding Rossmann-fold domains"/>
    <property type="match status" value="1"/>
</dbReference>
<dbReference type="PROSITE" id="PS00747">
    <property type="entry name" value="GLUTR"/>
    <property type="match status" value="1"/>
</dbReference>